<organism>
    <name type="scientific">Staphylococcus aureus (strain N315)</name>
    <dbReference type="NCBI Taxonomy" id="158879"/>
    <lineage>
        <taxon>Bacteria</taxon>
        <taxon>Bacillati</taxon>
        <taxon>Bacillota</taxon>
        <taxon>Bacilli</taxon>
        <taxon>Bacillales</taxon>
        <taxon>Staphylococcaceae</taxon>
        <taxon>Staphylococcus</taxon>
    </lineage>
</organism>
<sequence length="984" mass="111295">MQEHLVVTLDGKDYLVEPGTNLLEFIKSQDTFVPSICYNESMGPIQTCDTCTVEIDGKIERSCSTVIDRPMTVNTVNNDVKDAQKEALDRILEKHMLYCTVCDYNNGDCEIHNTMDAWGLQHQTYEYKEKPYEKDYGPFYRYDPNQCILCGRCVEACQDIEVNETIRIDWDREHPRVIWDNDVPINESSCVSCGQCATVCPCNAMMEVNMEGNAGYMTDTEPGSLAAMIDLTKKAEPGYGPLFAISDSEAEMRKERIKKTKTVCTYCGVGCSFEVWTKDREILKVQPSHDSPANKIATCVKGKFSWGHINSDQRLTKPLVRKNGEFHEVEWDEALNVIADNFTSIKEKYGPDALSFISSSKATNEESYLMQKLARQVIGTNNVDNCSRYCQAPATKGLFRTVGHGGDSGSIEDLEKAAMSVLIGTNTAEAHPVIASRMKRAQKLFGQKIHVFDIRKHEMAERADRFYQPKPGTDLAWLSAVTKYIIDHDLHDKAFIDEWVDDFDEYYKSLETFTMAFAEEATGIPESELIKFAEECAKAESVVICWAMGITQQDIGSDSSTAISNLLLVTGNYRRPGTGAYPLRGHNNVQGCSDMGSMPDKITGYQSIEADDIRAKFEKEYGVKLNPKAGKDNHEMVEGIHDGEVHSLYLYGEDTGIVDSNINFVQAAFEKLDFMVVQDEFLTFTATYADVVLPASPSLEKDGTFTNTERRIQRLYQALEPLGDSKPDWKIFQAIANRLGFDWNYKHPSEIMDEVARLTPLYAGVSYDRLEGFNSLQWPVQPDGTDEPILYLEGFNFDNGKAKLFPLSFDNYFKQDEIYDIHVNNGRLLEHFHEGNMTYQTPMIKYKVPRAFVEISPELAEDRGIHEGAEVKLISETGEAVLQVHVTDRVKGKEIYIPLNNDAMENGDLGAINLLTNSDVDQYTDTPSYKRTSCRLEVITKRGKSPLNPNNFRVNKKRHPQYSVQVQKKWERSDYVFPGNQVDK</sequence>
<proteinExistence type="evidence at protein level"/>
<name>FDHL_STAAN</name>
<comment type="catalytic activity">
    <reaction>
        <text>formate + NAD(+) = CO2 + NADH</text>
        <dbReference type="Rhea" id="RHEA:15985"/>
        <dbReference type="ChEBI" id="CHEBI:15740"/>
        <dbReference type="ChEBI" id="CHEBI:16526"/>
        <dbReference type="ChEBI" id="CHEBI:57540"/>
        <dbReference type="ChEBI" id="CHEBI:57945"/>
        <dbReference type="EC" id="1.17.1.9"/>
    </reaction>
</comment>
<comment type="cofactor">
    <cofactor evidence="1">
        <name>[2Fe-2S] cluster</name>
        <dbReference type="ChEBI" id="CHEBI:190135"/>
    </cofactor>
    <text evidence="1">Binds 1 [2Fe-2S] cluster.</text>
</comment>
<comment type="cofactor">
    <cofactor evidence="1">
        <name>[4Fe-4S] cluster</name>
        <dbReference type="ChEBI" id="CHEBI:49883"/>
    </cofactor>
    <text evidence="1">Binds 4 [4Fe-4S] clusters.</text>
</comment>
<comment type="cofactor">
    <cofactor evidence="1">
        <name>Mo-bis(molybdopterin guanine dinucleotide)</name>
        <dbReference type="ChEBI" id="CHEBI:60539"/>
    </cofactor>
    <text evidence="1">Binds 1 molybdenum-bis(molybdopterin guanine dinucleotide) (Mo-bis-MGD) cofactor per subunit.</text>
</comment>
<comment type="similarity">
    <text evidence="6">In the C-terminal section; belongs to the prokaryotic molybdopterin-containing oxidoreductase family.</text>
</comment>
<keyword id="KW-0001">2Fe-2S</keyword>
<keyword id="KW-0004">4Fe-4S</keyword>
<keyword id="KW-0408">Iron</keyword>
<keyword id="KW-0411">Iron-sulfur</keyword>
<keyword id="KW-0479">Metal-binding</keyword>
<keyword id="KW-0500">Molybdenum</keyword>
<keyword id="KW-0520">NAD</keyword>
<keyword id="KW-0560">Oxidoreductase</keyword>
<keyword id="KW-0677">Repeat</keyword>
<reference key="1">
    <citation type="journal article" date="2001" name="Lancet">
        <title>Whole genome sequencing of meticillin-resistant Staphylococcus aureus.</title>
        <authorList>
            <person name="Kuroda M."/>
            <person name="Ohta T."/>
            <person name="Uchiyama I."/>
            <person name="Baba T."/>
            <person name="Yuzawa H."/>
            <person name="Kobayashi I."/>
            <person name="Cui L."/>
            <person name="Oguchi A."/>
            <person name="Aoki K."/>
            <person name="Nagai Y."/>
            <person name="Lian J.-Q."/>
            <person name="Ito T."/>
            <person name="Kanamori M."/>
            <person name="Matsumaru H."/>
            <person name="Maruyama A."/>
            <person name="Murakami H."/>
            <person name="Hosoyama A."/>
            <person name="Mizutani-Ui Y."/>
            <person name="Takahashi N.K."/>
            <person name="Sawano T."/>
            <person name="Inoue R."/>
            <person name="Kaito C."/>
            <person name="Sekimizu K."/>
            <person name="Hirakawa H."/>
            <person name="Kuhara S."/>
            <person name="Goto S."/>
            <person name="Yabuzaki J."/>
            <person name="Kanehisa M."/>
            <person name="Yamashita A."/>
            <person name="Oshima K."/>
            <person name="Furuya K."/>
            <person name="Yoshino C."/>
            <person name="Shiba T."/>
            <person name="Hattori M."/>
            <person name="Ogasawara N."/>
            <person name="Hayashi H."/>
            <person name="Hiramatsu K."/>
        </authorList>
    </citation>
    <scope>NUCLEOTIDE SEQUENCE [LARGE SCALE GENOMIC DNA]</scope>
    <source>
        <strain>N315</strain>
    </source>
</reference>
<reference key="2">
    <citation type="submission" date="2005-11" db="UniProtKB">
        <title>Shotgun proteomic analysis of total protein extract of S. aureus S30 versus N315.</title>
        <authorList>
            <person name="Stenz L."/>
        </authorList>
    </citation>
    <scope>IDENTIFICATION BY MASS SPECTROMETRY</scope>
</reference>
<reference key="3">
    <citation type="submission" date="2007-10" db="UniProtKB">
        <title>Shotgun proteomic analysis of total and membrane protein extracts of S. aureus strain N315.</title>
        <authorList>
            <person name="Vaezzadeh A.R."/>
            <person name="Deshusses J."/>
            <person name="Lescuyer P."/>
            <person name="Hochstrasser D.F."/>
        </authorList>
    </citation>
    <scope>IDENTIFICATION BY MASS SPECTROMETRY [LARGE SCALE ANALYSIS]</scope>
    <source>
        <strain>N315</strain>
    </source>
</reference>
<evidence type="ECO:0000250" key="1"/>
<evidence type="ECO:0000255" key="2">
    <source>
        <dbReference type="PROSITE-ProRule" id="PRU00465"/>
    </source>
</evidence>
<evidence type="ECO:0000255" key="3">
    <source>
        <dbReference type="PROSITE-ProRule" id="PRU00711"/>
    </source>
</evidence>
<evidence type="ECO:0000255" key="4">
    <source>
        <dbReference type="PROSITE-ProRule" id="PRU01004"/>
    </source>
</evidence>
<evidence type="ECO:0000255" key="5">
    <source>
        <dbReference type="PROSITE-ProRule" id="PRU01184"/>
    </source>
</evidence>
<evidence type="ECO:0000305" key="6"/>
<accession>Q99RW4</accession>
<feature type="chain" id="PRO_0000301267" description="Putative formate dehydrogenase SA2102">
    <location>
        <begin position="1"/>
        <end position="984"/>
    </location>
</feature>
<feature type="domain" description="2Fe-2S ferredoxin-type" evidence="2">
    <location>
        <begin position="3"/>
        <end position="79"/>
    </location>
</feature>
<feature type="domain" description="4Fe-4S His(Cys)3-ligated-type" evidence="5">
    <location>
        <begin position="79"/>
        <end position="119"/>
    </location>
</feature>
<feature type="domain" description="4Fe-4S ferredoxin-type 1" evidence="3">
    <location>
        <begin position="138"/>
        <end position="165"/>
    </location>
</feature>
<feature type="domain" description="4Fe-4S ferredoxin-type 2" evidence="3">
    <location>
        <begin position="181"/>
        <end position="211"/>
    </location>
</feature>
<feature type="domain" description="4Fe-4S Mo/W bis-MGD-type" evidence="4">
    <location>
        <begin position="257"/>
        <end position="313"/>
    </location>
</feature>
<feature type="region of interest" description="Formate dehydrogenase">
    <location>
        <begin position="252"/>
        <end position="984"/>
    </location>
</feature>
<feature type="binding site" evidence="1">
    <location>
        <position position="37"/>
    </location>
    <ligand>
        <name>[2Fe-2S] cluster</name>
        <dbReference type="ChEBI" id="CHEBI:190135"/>
    </ligand>
</feature>
<feature type="binding site" evidence="1">
    <location>
        <position position="48"/>
    </location>
    <ligand>
        <name>[2Fe-2S] cluster</name>
        <dbReference type="ChEBI" id="CHEBI:190135"/>
    </ligand>
</feature>
<feature type="binding site" evidence="1">
    <location>
        <position position="51"/>
    </location>
    <ligand>
        <name>[2Fe-2S] cluster</name>
        <dbReference type="ChEBI" id="CHEBI:190135"/>
    </ligand>
</feature>
<feature type="binding site" evidence="1">
    <location>
        <position position="63"/>
    </location>
    <ligand>
        <name>[2Fe-2S] cluster</name>
        <dbReference type="ChEBI" id="CHEBI:190135"/>
    </ligand>
</feature>
<feature type="binding site" evidence="5">
    <location>
        <position position="95"/>
    </location>
    <ligand>
        <name>[4Fe-4S] cluster</name>
        <dbReference type="ChEBI" id="CHEBI:49883"/>
        <label>1</label>
    </ligand>
</feature>
<feature type="binding site" evidence="5">
    <location>
        <position position="99"/>
    </location>
    <ligand>
        <name>[4Fe-4S] cluster</name>
        <dbReference type="ChEBI" id="CHEBI:49883"/>
        <label>1</label>
    </ligand>
</feature>
<feature type="binding site" evidence="5">
    <location>
        <position position="102"/>
    </location>
    <ligand>
        <name>[4Fe-4S] cluster</name>
        <dbReference type="ChEBI" id="CHEBI:49883"/>
        <label>1</label>
    </ligand>
</feature>
<feature type="binding site" evidence="5">
    <location>
        <position position="109"/>
    </location>
    <ligand>
        <name>[4Fe-4S] cluster</name>
        <dbReference type="ChEBI" id="CHEBI:49883"/>
        <label>1</label>
    </ligand>
</feature>
<feature type="binding site" evidence="1">
    <location>
        <position position="147"/>
    </location>
    <ligand>
        <name>[4Fe-4S] cluster</name>
        <dbReference type="ChEBI" id="CHEBI:49883"/>
        <label>2</label>
    </ligand>
</feature>
<feature type="binding site" evidence="1">
    <location>
        <position position="150"/>
    </location>
    <ligand>
        <name>[4Fe-4S] cluster</name>
        <dbReference type="ChEBI" id="CHEBI:49883"/>
        <label>2</label>
    </ligand>
</feature>
<feature type="binding site" evidence="1">
    <location>
        <position position="153"/>
    </location>
    <ligand>
        <name>[4Fe-4S] cluster</name>
        <dbReference type="ChEBI" id="CHEBI:49883"/>
        <label>2</label>
    </ligand>
</feature>
<feature type="binding site" evidence="1">
    <location>
        <position position="157"/>
    </location>
    <ligand>
        <name>[4Fe-4S] cluster</name>
        <dbReference type="ChEBI" id="CHEBI:49883"/>
        <label>3</label>
    </ligand>
</feature>
<feature type="binding site" evidence="1">
    <location>
        <position position="190"/>
    </location>
    <ligand>
        <name>[4Fe-4S] cluster</name>
        <dbReference type="ChEBI" id="CHEBI:49883"/>
        <label>3</label>
    </ligand>
</feature>
<feature type="binding site" evidence="1">
    <location>
        <position position="193"/>
    </location>
    <ligand>
        <name>[4Fe-4S] cluster</name>
        <dbReference type="ChEBI" id="CHEBI:49883"/>
        <label>3</label>
    </ligand>
</feature>
<feature type="binding site" evidence="1">
    <location>
        <position position="196"/>
    </location>
    <ligand>
        <name>[4Fe-4S] cluster</name>
        <dbReference type="ChEBI" id="CHEBI:49883"/>
        <label>3</label>
    </ligand>
</feature>
<feature type="binding site" evidence="1">
    <location>
        <position position="200"/>
    </location>
    <ligand>
        <name>[4Fe-4S] cluster</name>
        <dbReference type="ChEBI" id="CHEBI:49883"/>
        <label>2</label>
    </ligand>
</feature>
<feature type="binding site" evidence="1">
    <location>
        <position position="264"/>
    </location>
    <ligand>
        <name>[4Fe-4S] cluster</name>
        <dbReference type="ChEBI" id="CHEBI:49883"/>
        <label>4</label>
    </ligand>
</feature>
<feature type="binding site" evidence="1">
    <location>
        <position position="267"/>
    </location>
    <ligand>
        <name>[4Fe-4S] cluster</name>
        <dbReference type="ChEBI" id="CHEBI:49883"/>
        <label>4</label>
    </ligand>
</feature>
<feature type="binding site" evidence="1">
    <location>
        <position position="271"/>
    </location>
    <ligand>
        <name>[4Fe-4S] cluster</name>
        <dbReference type="ChEBI" id="CHEBI:49883"/>
        <label>4</label>
    </ligand>
</feature>
<feature type="binding site" evidence="1">
    <location>
        <position position="299"/>
    </location>
    <ligand>
        <name>[4Fe-4S] cluster</name>
        <dbReference type="ChEBI" id="CHEBI:49883"/>
        <label>4</label>
    </ligand>
</feature>
<gene>
    <name type="ordered locus">SA2102</name>
</gene>
<dbReference type="EC" id="1.17.1.9"/>
<dbReference type="EMBL" id="BA000018">
    <property type="protein sequence ID" value="BAB43401.1"/>
    <property type="molecule type" value="Genomic_DNA"/>
</dbReference>
<dbReference type="PIR" id="H90029">
    <property type="entry name" value="H90029"/>
</dbReference>
<dbReference type="SMR" id="Q99RW4"/>
<dbReference type="EnsemblBacteria" id="BAB43401">
    <property type="protein sequence ID" value="BAB43401"/>
    <property type="gene ID" value="BAB43401"/>
</dbReference>
<dbReference type="KEGG" id="sau:SA2102"/>
<dbReference type="HOGENOM" id="CLU_000422_2_1_9"/>
<dbReference type="GO" id="GO:0016020">
    <property type="term" value="C:membrane"/>
    <property type="evidence" value="ECO:0007669"/>
    <property type="project" value="TreeGrafter"/>
</dbReference>
<dbReference type="GO" id="GO:0051537">
    <property type="term" value="F:2 iron, 2 sulfur cluster binding"/>
    <property type="evidence" value="ECO:0007669"/>
    <property type="project" value="UniProtKB-KW"/>
</dbReference>
<dbReference type="GO" id="GO:0051539">
    <property type="term" value="F:4 iron, 4 sulfur cluster binding"/>
    <property type="evidence" value="ECO:0007669"/>
    <property type="project" value="UniProtKB-KW"/>
</dbReference>
<dbReference type="GO" id="GO:0008863">
    <property type="term" value="F:formate dehydrogenase (NAD+) activity"/>
    <property type="evidence" value="ECO:0007669"/>
    <property type="project" value="UniProtKB-EC"/>
</dbReference>
<dbReference type="GO" id="GO:0046872">
    <property type="term" value="F:metal ion binding"/>
    <property type="evidence" value="ECO:0007669"/>
    <property type="project" value="UniProtKB-KW"/>
</dbReference>
<dbReference type="GO" id="GO:0043546">
    <property type="term" value="F:molybdopterin cofactor binding"/>
    <property type="evidence" value="ECO:0007669"/>
    <property type="project" value="InterPro"/>
</dbReference>
<dbReference type="GO" id="GO:0003954">
    <property type="term" value="F:NADH dehydrogenase activity"/>
    <property type="evidence" value="ECO:0007669"/>
    <property type="project" value="TreeGrafter"/>
</dbReference>
<dbReference type="GO" id="GO:0015942">
    <property type="term" value="P:formate metabolic process"/>
    <property type="evidence" value="ECO:0007669"/>
    <property type="project" value="InterPro"/>
</dbReference>
<dbReference type="GO" id="GO:0022904">
    <property type="term" value="P:respiratory electron transport chain"/>
    <property type="evidence" value="ECO:0007669"/>
    <property type="project" value="TreeGrafter"/>
</dbReference>
<dbReference type="CDD" id="cd00207">
    <property type="entry name" value="fer2"/>
    <property type="match status" value="1"/>
</dbReference>
<dbReference type="CDD" id="cd02792">
    <property type="entry name" value="MopB_CT_Formate-Dh-Na-like"/>
    <property type="match status" value="1"/>
</dbReference>
<dbReference type="CDD" id="cd02753">
    <property type="entry name" value="MopB_Formate-Dh-H"/>
    <property type="match status" value="1"/>
</dbReference>
<dbReference type="FunFam" id="2.20.25.90:FF:000001">
    <property type="entry name" value="Formate dehydrogenase subunit alpha"/>
    <property type="match status" value="1"/>
</dbReference>
<dbReference type="FunFam" id="3.10.20.740:FF:000003">
    <property type="entry name" value="Formate dehydrogenase subunit alpha"/>
    <property type="match status" value="1"/>
</dbReference>
<dbReference type="FunFam" id="3.40.228.10:FF:000002">
    <property type="entry name" value="Formate dehydrogenase subunit alpha"/>
    <property type="match status" value="1"/>
</dbReference>
<dbReference type="FunFam" id="3.30.70.20:FF:000032">
    <property type="entry name" value="Formate dehydrogenase, alpha subunit"/>
    <property type="match status" value="1"/>
</dbReference>
<dbReference type="FunFam" id="2.40.40.20:FF:000005">
    <property type="entry name" value="Periplasmic nitrate reductase"/>
    <property type="match status" value="1"/>
</dbReference>
<dbReference type="Gene3D" id="2.40.40.20">
    <property type="match status" value="1"/>
</dbReference>
<dbReference type="Gene3D" id="3.10.20.740">
    <property type="match status" value="1"/>
</dbReference>
<dbReference type="Gene3D" id="3.30.70.20">
    <property type="match status" value="1"/>
</dbReference>
<dbReference type="Gene3D" id="3.40.50.740">
    <property type="match status" value="1"/>
</dbReference>
<dbReference type="Gene3D" id="2.20.25.90">
    <property type="entry name" value="ADC-like domains"/>
    <property type="match status" value="1"/>
</dbReference>
<dbReference type="Gene3D" id="3.40.228.10">
    <property type="entry name" value="Dimethylsulfoxide Reductase, domain 2"/>
    <property type="match status" value="1"/>
</dbReference>
<dbReference type="InterPro" id="IPR036010">
    <property type="entry name" value="2Fe-2S_ferredoxin-like_sf"/>
</dbReference>
<dbReference type="InterPro" id="IPR001041">
    <property type="entry name" value="2Fe-2S_ferredoxin-type"/>
</dbReference>
<dbReference type="InterPro" id="IPR017896">
    <property type="entry name" value="4Fe4S_Fe-S-bd"/>
</dbReference>
<dbReference type="InterPro" id="IPR017900">
    <property type="entry name" value="4Fe4S_Fe_S_CS"/>
</dbReference>
<dbReference type="InterPro" id="IPR009010">
    <property type="entry name" value="Asp_de-COase-like_dom_sf"/>
</dbReference>
<dbReference type="InterPro" id="IPR041924">
    <property type="entry name" value="Formate_Dh-H_N"/>
</dbReference>
<dbReference type="InterPro" id="IPR006478">
    <property type="entry name" value="Formate_DH_asu"/>
</dbReference>
<dbReference type="InterPro" id="IPR006657">
    <property type="entry name" value="MoPterin_dinucl-bd_dom"/>
</dbReference>
<dbReference type="InterPro" id="IPR006656">
    <property type="entry name" value="Mopterin_OxRdtase"/>
</dbReference>
<dbReference type="InterPro" id="IPR006963">
    <property type="entry name" value="Mopterin_OxRdtase_4Fe-4S_dom"/>
</dbReference>
<dbReference type="InterPro" id="IPR006655">
    <property type="entry name" value="Mopterin_OxRdtase_prok_CS"/>
</dbReference>
<dbReference type="InterPro" id="IPR027467">
    <property type="entry name" value="MopterinOxRdtase_cofactor_BS"/>
</dbReference>
<dbReference type="InterPro" id="IPR019574">
    <property type="entry name" value="NADH_UbQ_OxRdtase_Gsu_4Fe4S-bd"/>
</dbReference>
<dbReference type="InterPro" id="IPR050123">
    <property type="entry name" value="Prok_molybdopt-oxidoreductase"/>
</dbReference>
<dbReference type="NCBIfam" id="TIGR01591">
    <property type="entry name" value="Fdh-alpha"/>
    <property type="match status" value="1"/>
</dbReference>
<dbReference type="PANTHER" id="PTHR43105:SF14">
    <property type="entry name" value="FORMATE DEHYDROGENASE H"/>
    <property type="match status" value="1"/>
</dbReference>
<dbReference type="PANTHER" id="PTHR43105">
    <property type="entry name" value="RESPIRATORY NITRATE REDUCTASE"/>
    <property type="match status" value="1"/>
</dbReference>
<dbReference type="Pfam" id="PF13510">
    <property type="entry name" value="Fer2_4"/>
    <property type="match status" value="1"/>
</dbReference>
<dbReference type="Pfam" id="PF12838">
    <property type="entry name" value="Fer4_7"/>
    <property type="match status" value="1"/>
</dbReference>
<dbReference type="Pfam" id="PF04879">
    <property type="entry name" value="Molybdop_Fe4S4"/>
    <property type="match status" value="1"/>
</dbReference>
<dbReference type="Pfam" id="PF00384">
    <property type="entry name" value="Molybdopterin"/>
    <property type="match status" value="1"/>
</dbReference>
<dbReference type="Pfam" id="PF01568">
    <property type="entry name" value="Molydop_binding"/>
    <property type="match status" value="1"/>
</dbReference>
<dbReference type="Pfam" id="PF10588">
    <property type="entry name" value="NADH-G_4Fe-4S_3"/>
    <property type="match status" value="1"/>
</dbReference>
<dbReference type="PIRSF" id="PIRSF036643">
    <property type="entry name" value="FDH_alpha"/>
    <property type="match status" value="1"/>
</dbReference>
<dbReference type="SMART" id="SM00926">
    <property type="entry name" value="Molybdop_Fe4S4"/>
    <property type="match status" value="1"/>
</dbReference>
<dbReference type="SMART" id="SM00929">
    <property type="entry name" value="NADH-G_4Fe-4S_3"/>
    <property type="match status" value="1"/>
</dbReference>
<dbReference type="SUPFAM" id="SSF54292">
    <property type="entry name" value="2Fe-2S ferredoxin-like"/>
    <property type="match status" value="1"/>
</dbReference>
<dbReference type="SUPFAM" id="SSF54862">
    <property type="entry name" value="4Fe-4S ferredoxins"/>
    <property type="match status" value="1"/>
</dbReference>
<dbReference type="SUPFAM" id="SSF50692">
    <property type="entry name" value="ADC-like"/>
    <property type="match status" value="1"/>
</dbReference>
<dbReference type="SUPFAM" id="SSF53706">
    <property type="entry name" value="Formate dehydrogenase/DMSO reductase, domains 1-3"/>
    <property type="match status" value="1"/>
</dbReference>
<dbReference type="PROSITE" id="PS51085">
    <property type="entry name" value="2FE2S_FER_2"/>
    <property type="match status" value="1"/>
</dbReference>
<dbReference type="PROSITE" id="PS00198">
    <property type="entry name" value="4FE4S_FER_1"/>
    <property type="match status" value="1"/>
</dbReference>
<dbReference type="PROSITE" id="PS51379">
    <property type="entry name" value="4FE4S_FER_2"/>
    <property type="match status" value="2"/>
</dbReference>
<dbReference type="PROSITE" id="PS51839">
    <property type="entry name" value="4FE4S_HC3"/>
    <property type="match status" value="1"/>
</dbReference>
<dbReference type="PROSITE" id="PS51669">
    <property type="entry name" value="4FE4S_MOW_BIS_MGD"/>
    <property type="match status" value="1"/>
</dbReference>
<dbReference type="PROSITE" id="PS00551">
    <property type="entry name" value="MOLYBDOPTERIN_PROK_1"/>
    <property type="match status" value="1"/>
</dbReference>
<dbReference type="PROSITE" id="PS00932">
    <property type="entry name" value="MOLYBDOPTERIN_PROK_3"/>
    <property type="match status" value="1"/>
</dbReference>
<protein>
    <recommendedName>
        <fullName>Putative formate dehydrogenase SA2102</fullName>
        <ecNumber>1.17.1.9</ecNumber>
    </recommendedName>
</protein>